<keyword id="KW-0067">ATP-binding</keyword>
<keyword id="KW-0418">Kinase</keyword>
<keyword id="KW-0496">Mitochondrion</keyword>
<keyword id="KW-0547">Nucleotide-binding</keyword>
<keyword id="KW-1185">Reference proteome</keyword>
<keyword id="KW-0808">Transferase</keyword>
<keyword id="KW-0809">Transit peptide</keyword>
<accession>P91622</accession>
<accession>Q9V580</accession>
<protein>
    <recommendedName>
        <fullName>[Pyruvate dehydrogenase (acetyl-transferring)] kinase, mitochondrial</fullName>
        <shortName>DmPDK</shortName>
        <shortName>Pyruvate dehydrogenase kinase</shortName>
        <ecNumber>2.7.11.2</ecNumber>
    </recommendedName>
</protein>
<proteinExistence type="evidence at transcript level"/>
<evidence type="ECO:0000250" key="1"/>
<evidence type="ECO:0000255" key="2"/>
<evidence type="ECO:0000255" key="3">
    <source>
        <dbReference type="PROSITE-ProRule" id="PRU00107"/>
    </source>
</evidence>
<evidence type="ECO:0000269" key="4">
    <source>
    </source>
</evidence>
<evidence type="ECO:0000305" key="5"/>
<reference key="1">
    <citation type="journal article" date="1997" name="DNA Cell Biol.">
        <title>cDNA sequence and expression of a gene encoding a pyruvate dehydrogenase kinase homolog of Drosophila melanogaster.</title>
        <authorList>
            <person name="Katsube T."/>
            <person name="Nomoto S."/>
            <person name="Togashi S."/>
            <person name="Ueda R."/>
            <person name="Kobayashi M."/>
            <person name="Takahisa M."/>
        </authorList>
    </citation>
    <scope>NUCLEOTIDE SEQUENCE [MRNA]</scope>
    <scope>DEVELOPMENTAL STAGE</scope>
    <source>
        <strain>Canton-S</strain>
    </source>
</reference>
<reference key="2">
    <citation type="journal article" date="2000" name="Science">
        <title>The genome sequence of Drosophila melanogaster.</title>
        <authorList>
            <person name="Adams M.D."/>
            <person name="Celniker S.E."/>
            <person name="Holt R.A."/>
            <person name="Evans C.A."/>
            <person name="Gocayne J.D."/>
            <person name="Amanatides P.G."/>
            <person name="Scherer S.E."/>
            <person name="Li P.W."/>
            <person name="Hoskins R.A."/>
            <person name="Galle R.F."/>
            <person name="George R.A."/>
            <person name="Lewis S.E."/>
            <person name="Richards S."/>
            <person name="Ashburner M."/>
            <person name="Henderson S.N."/>
            <person name="Sutton G.G."/>
            <person name="Wortman J.R."/>
            <person name="Yandell M.D."/>
            <person name="Zhang Q."/>
            <person name="Chen L.X."/>
            <person name="Brandon R.C."/>
            <person name="Rogers Y.-H.C."/>
            <person name="Blazej R.G."/>
            <person name="Champe M."/>
            <person name="Pfeiffer B.D."/>
            <person name="Wan K.H."/>
            <person name="Doyle C."/>
            <person name="Baxter E.G."/>
            <person name="Helt G."/>
            <person name="Nelson C.R."/>
            <person name="Miklos G.L.G."/>
            <person name="Abril J.F."/>
            <person name="Agbayani A."/>
            <person name="An H.-J."/>
            <person name="Andrews-Pfannkoch C."/>
            <person name="Baldwin D."/>
            <person name="Ballew R.M."/>
            <person name="Basu A."/>
            <person name="Baxendale J."/>
            <person name="Bayraktaroglu L."/>
            <person name="Beasley E.M."/>
            <person name="Beeson K.Y."/>
            <person name="Benos P.V."/>
            <person name="Berman B.P."/>
            <person name="Bhandari D."/>
            <person name="Bolshakov S."/>
            <person name="Borkova D."/>
            <person name="Botchan M.R."/>
            <person name="Bouck J."/>
            <person name="Brokstein P."/>
            <person name="Brottier P."/>
            <person name="Burtis K.C."/>
            <person name="Busam D.A."/>
            <person name="Butler H."/>
            <person name="Cadieu E."/>
            <person name="Center A."/>
            <person name="Chandra I."/>
            <person name="Cherry J.M."/>
            <person name="Cawley S."/>
            <person name="Dahlke C."/>
            <person name="Davenport L.B."/>
            <person name="Davies P."/>
            <person name="de Pablos B."/>
            <person name="Delcher A."/>
            <person name="Deng Z."/>
            <person name="Mays A.D."/>
            <person name="Dew I."/>
            <person name="Dietz S.M."/>
            <person name="Dodson K."/>
            <person name="Doup L.E."/>
            <person name="Downes M."/>
            <person name="Dugan-Rocha S."/>
            <person name="Dunkov B.C."/>
            <person name="Dunn P."/>
            <person name="Durbin K.J."/>
            <person name="Evangelista C.C."/>
            <person name="Ferraz C."/>
            <person name="Ferriera S."/>
            <person name="Fleischmann W."/>
            <person name="Fosler C."/>
            <person name="Gabrielian A.E."/>
            <person name="Garg N.S."/>
            <person name="Gelbart W.M."/>
            <person name="Glasser K."/>
            <person name="Glodek A."/>
            <person name="Gong F."/>
            <person name="Gorrell J.H."/>
            <person name="Gu Z."/>
            <person name="Guan P."/>
            <person name="Harris M."/>
            <person name="Harris N.L."/>
            <person name="Harvey D.A."/>
            <person name="Heiman T.J."/>
            <person name="Hernandez J.R."/>
            <person name="Houck J."/>
            <person name="Hostin D."/>
            <person name="Houston K.A."/>
            <person name="Howland T.J."/>
            <person name="Wei M.-H."/>
            <person name="Ibegwam C."/>
            <person name="Jalali M."/>
            <person name="Kalush F."/>
            <person name="Karpen G.H."/>
            <person name="Ke Z."/>
            <person name="Kennison J.A."/>
            <person name="Ketchum K.A."/>
            <person name="Kimmel B.E."/>
            <person name="Kodira C.D."/>
            <person name="Kraft C.L."/>
            <person name="Kravitz S."/>
            <person name="Kulp D."/>
            <person name="Lai Z."/>
            <person name="Lasko P."/>
            <person name="Lei Y."/>
            <person name="Levitsky A.A."/>
            <person name="Li J.H."/>
            <person name="Li Z."/>
            <person name="Liang Y."/>
            <person name="Lin X."/>
            <person name="Liu X."/>
            <person name="Mattei B."/>
            <person name="McIntosh T.C."/>
            <person name="McLeod M.P."/>
            <person name="McPherson D."/>
            <person name="Merkulov G."/>
            <person name="Milshina N.V."/>
            <person name="Mobarry C."/>
            <person name="Morris J."/>
            <person name="Moshrefi A."/>
            <person name="Mount S.M."/>
            <person name="Moy M."/>
            <person name="Murphy B."/>
            <person name="Murphy L."/>
            <person name="Muzny D.M."/>
            <person name="Nelson D.L."/>
            <person name="Nelson D.R."/>
            <person name="Nelson K.A."/>
            <person name="Nixon K."/>
            <person name="Nusskern D.R."/>
            <person name="Pacleb J.M."/>
            <person name="Palazzolo M."/>
            <person name="Pittman G.S."/>
            <person name="Pan S."/>
            <person name="Pollard J."/>
            <person name="Puri V."/>
            <person name="Reese M.G."/>
            <person name="Reinert K."/>
            <person name="Remington K."/>
            <person name="Saunders R.D.C."/>
            <person name="Scheeler F."/>
            <person name="Shen H."/>
            <person name="Shue B.C."/>
            <person name="Siden-Kiamos I."/>
            <person name="Simpson M."/>
            <person name="Skupski M.P."/>
            <person name="Smith T.J."/>
            <person name="Spier E."/>
            <person name="Spradling A.C."/>
            <person name="Stapleton M."/>
            <person name="Strong R."/>
            <person name="Sun E."/>
            <person name="Svirskas R."/>
            <person name="Tector C."/>
            <person name="Turner R."/>
            <person name="Venter E."/>
            <person name="Wang A.H."/>
            <person name="Wang X."/>
            <person name="Wang Z.-Y."/>
            <person name="Wassarman D.A."/>
            <person name="Weinstock G.M."/>
            <person name="Weissenbach J."/>
            <person name="Williams S.M."/>
            <person name="Woodage T."/>
            <person name="Worley K.C."/>
            <person name="Wu D."/>
            <person name="Yang S."/>
            <person name="Yao Q.A."/>
            <person name="Ye J."/>
            <person name="Yeh R.-F."/>
            <person name="Zaveri J.S."/>
            <person name="Zhan M."/>
            <person name="Zhang G."/>
            <person name="Zhao Q."/>
            <person name="Zheng L."/>
            <person name="Zheng X.H."/>
            <person name="Zhong F.N."/>
            <person name="Zhong W."/>
            <person name="Zhou X."/>
            <person name="Zhu S.C."/>
            <person name="Zhu X."/>
            <person name="Smith H.O."/>
            <person name="Gibbs R.A."/>
            <person name="Myers E.W."/>
            <person name="Rubin G.M."/>
            <person name="Venter J.C."/>
        </authorList>
    </citation>
    <scope>NUCLEOTIDE SEQUENCE [LARGE SCALE GENOMIC DNA]</scope>
    <source>
        <strain>Berkeley</strain>
    </source>
</reference>
<reference key="3">
    <citation type="journal article" date="2002" name="Genome Biol.">
        <title>Annotation of the Drosophila melanogaster euchromatic genome: a systematic review.</title>
        <authorList>
            <person name="Misra S."/>
            <person name="Crosby M.A."/>
            <person name="Mungall C.J."/>
            <person name="Matthews B.B."/>
            <person name="Campbell K.S."/>
            <person name="Hradecky P."/>
            <person name="Huang Y."/>
            <person name="Kaminker J.S."/>
            <person name="Millburn G.H."/>
            <person name="Prochnik S.E."/>
            <person name="Smith C.D."/>
            <person name="Tupy J.L."/>
            <person name="Whitfield E.J."/>
            <person name="Bayraktaroglu L."/>
            <person name="Berman B.P."/>
            <person name="Bettencourt B.R."/>
            <person name="Celniker S.E."/>
            <person name="de Grey A.D.N.J."/>
            <person name="Drysdale R.A."/>
            <person name="Harris N.L."/>
            <person name="Richter J."/>
            <person name="Russo S."/>
            <person name="Schroeder A.J."/>
            <person name="Shu S.Q."/>
            <person name="Stapleton M."/>
            <person name="Yamada C."/>
            <person name="Ashburner M."/>
            <person name="Gelbart W.M."/>
            <person name="Rubin G.M."/>
            <person name="Lewis S.E."/>
        </authorList>
    </citation>
    <scope>GENOME REANNOTATION</scope>
    <source>
        <strain>Berkeley</strain>
    </source>
</reference>
<reference key="4">
    <citation type="journal article" date="2002" name="Genome Biol.">
        <title>A Drosophila full-length cDNA resource.</title>
        <authorList>
            <person name="Stapleton M."/>
            <person name="Carlson J.W."/>
            <person name="Brokstein P."/>
            <person name="Yu C."/>
            <person name="Champe M."/>
            <person name="George R.A."/>
            <person name="Guarin H."/>
            <person name="Kronmiller B."/>
            <person name="Pacleb J.M."/>
            <person name="Park S."/>
            <person name="Wan K.H."/>
            <person name="Rubin G.M."/>
            <person name="Celniker S.E."/>
        </authorList>
    </citation>
    <scope>NUCLEOTIDE SEQUENCE [LARGE SCALE MRNA]</scope>
    <source>
        <strain>Berkeley</strain>
        <tissue>Embryo</tissue>
    </source>
</reference>
<gene>
    <name type="primary">Pdk</name>
    <name type="ORF">CG8808</name>
</gene>
<dbReference type="EC" id="2.7.11.2"/>
<dbReference type="EMBL" id="D88814">
    <property type="protein sequence ID" value="BAA13724.1"/>
    <property type="molecule type" value="mRNA"/>
</dbReference>
<dbReference type="EMBL" id="AE013599">
    <property type="protein sequence ID" value="AAF58938.1"/>
    <property type="molecule type" value="Genomic_DNA"/>
</dbReference>
<dbReference type="EMBL" id="AY075385">
    <property type="protein sequence ID" value="AAL68223.1"/>
    <property type="molecule type" value="mRNA"/>
</dbReference>
<dbReference type="RefSeq" id="NP_001246224.1">
    <property type="nucleotide sequence ID" value="NM_001259295.2"/>
</dbReference>
<dbReference type="RefSeq" id="NP_477215.1">
    <property type="nucleotide sequence ID" value="NM_057867.4"/>
</dbReference>
<dbReference type="SMR" id="P91622"/>
<dbReference type="BioGRID" id="61801">
    <property type="interactions" value="6"/>
</dbReference>
<dbReference type="FunCoup" id="P91622">
    <property type="interactions" value="1126"/>
</dbReference>
<dbReference type="STRING" id="7227.FBpp0111805"/>
<dbReference type="PaxDb" id="7227-FBpp0111805"/>
<dbReference type="DNASU" id="35970"/>
<dbReference type="EnsemblMetazoa" id="FBtr0088508">
    <property type="protein sequence ID" value="FBpp0087592"/>
    <property type="gene ID" value="FBgn0017558"/>
</dbReference>
<dbReference type="EnsemblMetazoa" id="FBtr0306807">
    <property type="protein sequence ID" value="FBpp0297719"/>
    <property type="gene ID" value="FBgn0017558"/>
</dbReference>
<dbReference type="GeneID" id="35970"/>
<dbReference type="KEGG" id="dme:Dmel_CG8808"/>
<dbReference type="AGR" id="FB:FBgn0017558"/>
<dbReference type="CTD" id="35970"/>
<dbReference type="FlyBase" id="FBgn0017558">
    <property type="gene designation" value="Pdk"/>
</dbReference>
<dbReference type="VEuPathDB" id="VectorBase:FBgn0017558"/>
<dbReference type="eggNOG" id="KOG0787">
    <property type="taxonomic scope" value="Eukaryota"/>
</dbReference>
<dbReference type="GeneTree" id="ENSGT01030000234646"/>
<dbReference type="HOGENOM" id="CLU_023861_1_0_1"/>
<dbReference type="InParanoid" id="P91622"/>
<dbReference type="OrthoDB" id="241648at2759"/>
<dbReference type="PhylomeDB" id="P91622"/>
<dbReference type="Reactome" id="R-DME-204174">
    <property type="pathway name" value="Regulation of pyruvate dehydrogenase (PDH) complex"/>
</dbReference>
<dbReference type="Reactome" id="R-DME-5362517">
    <property type="pathway name" value="Signaling by Retinoic Acid"/>
</dbReference>
<dbReference type="Reactome" id="R-DME-9837999">
    <property type="pathway name" value="Mitochondrial protein degradation"/>
</dbReference>
<dbReference type="BioGRID-ORCS" id="35970">
    <property type="hits" value="0 hits in 3 CRISPR screens"/>
</dbReference>
<dbReference type="ChiTaRS" id="Pdk">
    <property type="organism name" value="fly"/>
</dbReference>
<dbReference type="GenomeRNAi" id="35970"/>
<dbReference type="PRO" id="PR:P91622"/>
<dbReference type="Proteomes" id="UP000000803">
    <property type="component" value="Chromosome 2R"/>
</dbReference>
<dbReference type="Bgee" id="FBgn0017558">
    <property type="expression patterns" value="Expressed in fat body cell in dorsal vessel heart and 254 other cell types or tissues"/>
</dbReference>
<dbReference type="ExpressionAtlas" id="P91622">
    <property type="expression patterns" value="baseline and differential"/>
</dbReference>
<dbReference type="GO" id="GO:0005759">
    <property type="term" value="C:mitochondrial matrix"/>
    <property type="evidence" value="ECO:0007669"/>
    <property type="project" value="UniProtKB-SubCell"/>
</dbReference>
<dbReference type="GO" id="GO:0005739">
    <property type="term" value="C:mitochondrion"/>
    <property type="evidence" value="ECO:0000318"/>
    <property type="project" value="GO_Central"/>
</dbReference>
<dbReference type="GO" id="GO:0045254">
    <property type="term" value="C:pyruvate dehydrogenase complex"/>
    <property type="evidence" value="ECO:0000250"/>
    <property type="project" value="FlyBase"/>
</dbReference>
<dbReference type="GO" id="GO:0005524">
    <property type="term" value="F:ATP binding"/>
    <property type="evidence" value="ECO:0007669"/>
    <property type="project" value="UniProtKB-KW"/>
</dbReference>
<dbReference type="GO" id="GO:0004672">
    <property type="term" value="F:protein kinase activity"/>
    <property type="evidence" value="ECO:0000250"/>
    <property type="project" value="FlyBase"/>
</dbReference>
<dbReference type="GO" id="GO:0004740">
    <property type="term" value="F:pyruvate dehydrogenase (acetyl-transferring) kinase activity"/>
    <property type="evidence" value="ECO:0000250"/>
    <property type="project" value="FlyBase"/>
</dbReference>
<dbReference type="GO" id="GO:0010510">
    <property type="term" value="P:regulation of acetyl-CoA biosynthetic process from pyruvate"/>
    <property type="evidence" value="ECO:0000318"/>
    <property type="project" value="GO_Central"/>
</dbReference>
<dbReference type="GO" id="GO:0010906">
    <property type="term" value="P:regulation of glucose metabolic process"/>
    <property type="evidence" value="ECO:0000250"/>
    <property type="project" value="FlyBase"/>
</dbReference>
<dbReference type="CDD" id="cd16929">
    <property type="entry name" value="HATPase_PDK-like"/>
    <property type="match status" value="1"/>
</dbReference>
<dbReference type="FunFam" id="1.20.140.20:FF:000001">
    <property type="entry name" value="[Pyruvate dehydrogenase (acetyl-transferring)] kinase isozyme 2, mitochondrial"/>
    <property type="match status" value="1"/>
</dbReference>
<dbReference type="FunFam" id="3.30.565.10:FF:000007">
    <property type="entry name" value="Mitochondrial pyruvate dehydrogenase kinase isoform 2"/>
    <property type="match status" value="1"/>
</dbReference>
<dbReference type="Gene3D" id="1.20.140.20">
    <property type="entry name" value="Alpha-ketoacid/pyruvate dehydrogenase kinase, N-terminal domain"/>
    <property type="match status" value="1"/>
</dbReference>
<dbReference type="Gene3D" id="3.30.565.10">
    <property type="entry name" value="Histidine kinase-like ATPase, C-terminal domain"/>
    <property type="match status" value="1"/>
</dbReference>
<dbReference type="InterPro" id="IPR036784">
    <property type="entry name" value="AK/P_DHK_N_sf"/>
</dbReference>
<dbReference type="InterPro" id="IPR018955">
    <property type="entry name" value="BCDHK/PDK_N"/>
</dbReference>
<dbReference type="InterPro" id="IPR039028">
    <property type="entry name" value="BCKD/PDK"/>
</dbReference>
<dbReference type="InterPro" id="IPR036890">
    <property type="entry name" value="HATPase_C_sf"/>
</dbReference>
<dbReference type="InterPro" id="IPR005467">
    <property type="entry name" value="His_kinase_dom"/>
</dbReference>
<dbReference type="PANTHER" id="PTHR11947:SF3">
    <property type="entry name" value="[PYRUVATE DEHYDROGENASE (ACETYL-TRANSFERRING)] KINASE, MITOCHONDRIAL"/>
    <property type="match status" value="1"/>
</dbReference>
<dbReference type="PANTHER" id="PTHR11947">
    <property type="entry name" value="PYRUVATE DEHYDROGENASE KINASE"/>
    <property type="match status" value="1"/>
</dbReference>
<dbReference type="Pfam" id="PF10436">
    <property type="entry name" value="BCDHK_Adom3"/>
    <property type="match status" value="1"/>
</dbReference>
<dbReference type="Pfam" id="PF02518">
    <property type="entry name" value="HATPase_c"/>
    <property type="match status" value="1"/>
</dbReference>
<dbReference type="SMART" id="SM00387">
    <property type="entry name" value="HATPase_c"/>
    <property type="match status" value="1"/>
</dbReference>
<dbReference type="SUPFAM" id="SSF69012">
    <property type="entry name" value="alpha-ketoacid dehydrogenase kinase, N-terminal domain"/>
    <property type="match status" value="1"/>
</dbReference>
<dbReference type="SUPFAM" id="SSF55874">
    <property type="entry name" value="ATPase domain of HSP90 chaperone/DNA topoisomerase II/histidine kinase"/>
    <property type="match status" value="1"/>
</dbReference>
<dbReference type="PROSITE" id="PS50109">
    <property type="entry name" value="HIS_KIN"/>
    <property type="match status" value="1"/>
</dbReference>
<sequence>MRLFPVRFSAASSSMASLAKMLDFYSGFNPSPLSIKQFMDFGQNACEKKSYIFLRKELPVRLANIMKEIALLPDNLLHTRSVSEVSSWYVKSFEDVLVYEKAEPTHDNLQKFVADLDLIRNRHNDVVQTMAQGVIEMKENEGGQVDAPTESSIQYFLDRLYMSRISIRMLINQHTLLFGGNPHAGGRHIGCLDPACDLSDVVRDAYENARFLCDQYYLTSPALEIQQHSSEPGDNLPIRTVYVPSHLYYMLFELFKNSMRAVVEHHGHDNNDTLPPLKVAICKGKEDICVKISDQGGGIPRSQTDQLFKYMYSTAPQPSKSDLHTVPLAGYGYGLPISRLYARYFHGDIVLLSCEGFGTDAIIYLKALSDEANELLPIFNKTSSKFYRATVPTGDWSNQVKYAKKKKTSAVNQ</sequence>
<feature type="transit peptide" description="Mitochondrion" evidence="2">
    <location>
        <begin position="1"/>
        <end status="unknown"/>
    </location>
</feature>
<feature type="chain" id="PRO_0000023451" description="[Pyruvate dehydrogenase (acetyl-transferring)] kinase, mitochondrial">
    <location>
        <begin status="unknown"/>
        <end position="413"/>
    </location>
</feature>
<feature type="domain" description="Histidine kinase" evidence="3">
    <location>
        <begin position="137"/>
        <end position="369"/>
    </location>
</feature>
<feature type="binding site" evidence="1">
    <location>
        <begin position="253"/>
        <end position="260"/>
    </location>
    <ligand>
        <name>ATP</name>
        <dbReference type="ChEBI" id="CHEBI:30616"/>
    </ligand>
</feature>
<feature type="binding site" evidence="1">
    <location>
        <position position="294"/>
    </location>
    <ligand>
        <name>ATP</name>
        <dbReference type="ChEBI" id="CHEBI:30616"/>
    </ligand>
</feature>
<feature type="binding site" evidence="1">
    <location>
        <begin position="313"/>
        <end position="314"/>
    </location>
    <ligand>
        <name>ATP</name>
        <dbReference type="ChEBI" id="CHEBI:30616"/>
    </ligand>
</feature>
<feature type="binding site" evidence="1">
    <location>
        <begin position="330"/>
        <end position="335"/>
    </location>
    <ligand>
        <name>ATP</name>
        <dbReference type="ChEBI" id="CHEBI:30616"/>
    </ligand>
</feature>
<feature type="sequence conflict" description="In Ref. 1; BAA13724." evidence="5" ref="1">
    <original>S</original>
    <variation>L</variation>
    <location>
        <position position="13"/>
    </location>
</feature>
<feature type="sequence conflict" description="In Ref. 1; BAA13724." evidence="5" ref="1">
    <original>N</original>
    <variation>S</variation>
    <location>
        <position position="412"/>
    </location>
</feature>
<comment type="function">
    <text>Inhibits the mitochondrial pyruvate dehydrogenase complex by phosphorylation of the E1 alpha subunit, thus contributing to the regulation of glucose metabolism.</text>
</comment>
<comment type="catalytic activity">
    <reaction>
        <text>L-seryl-[pyruvate dehydrogenase E1 alpha subunit] + ATP = O-phospho-L-seryl-[pyruvate dehydrogenase E1 alpha subunit] + ADP + H(+)</text>
        <dbReference type="Rhea" id="RHEA:23052"/>
        <dbReference type="Rhea" id="RHEA-COMP:13689"/>
        <dbReference type="Rhea" id="RHEA-COMP:13690"/>
        <dbReference type="ChEBI" id="CHEBI:15378"/>
        <dbReference type="ChEBI" id="CHEBI:29999"/>
        <dbReference type="ChEBI" id="CHEBI:30616"/>
        <dbReference type="ChEBI" id="CHEBI:83421"/>
        <dbReference type="ChEBI" id="CHEBI:456216"/>
        <dbReference type="EC" id="2.7.11.2"/>
    </reaction>
</comment>
<comment type="subcellular location">
    <subcellularLocation>
        <location>Mitochondrion matrix</location>
    </subcellularLocation>
</comment>
<comment type="developmental stage">
    <text evidence="4">Expressed both maternally and zygotically.</text>
</comment>
<comment type="similarity">
    <text evidence="5">Belongs to the PDK/BCKDK protein kinase family.</text>
</comment>
<name>PDK_DROME</name>
<organism>
    <name type="scientific">Drosophila melanogaster</name>
    <name type="common">Fruit fly</name>
    <dbReference type="NCBI Taxonomy" id="7227"/>
    <lineage>
        <taxon>Eukaryota</taxon>
        <taxon>Metazoa</taxon>
        <taxon>Ecdysozoa</taxon>
        <taxon>Arthropoda</taxon>
        <taxon>Hexapoda</taxon>
        <taxon>Insecta</taxon>
        <taxon>Pterygota</taxon>
        <taxon>Neoptera</taxon>
        <taxon>Endopterygota</taxon>
        <taxon>Diptera</taxon>
        <taxon>Brachycera</taxon>
        <taxon>Muscomorpha</taxon>
        <taxon>Ephydroidea</taxon>
        <taxon>Drosophilidae</taxon>
        <taxon>Drosophila</taxon>
        <taxon>Sophophora</taxon>
    </lineage>
</organism>